<protein>
    <recommendedName>
        <fullName evidence="1">Large ribosomal subunit protein bL28</fullName>
    </recommendedName>
    <alternativeName>
        <fullName evidence="2">50S ribosomal protein L28</fullName>
    </alternativeName>
</protein>
<keyword id="KW-1185">Reference proteome</keyword>
<keyword id="KW-0687">Ribonucleoprotein</keyword>
<keyword id="KW-0689">Ribosomal protein</keyword>
<sequence>MARVCVVTGKKPMVGNNVSHANNKTKRRFLPNLQYRRFWVESENRWVRLRLSNAALRTIDKNGIESVLADLRARGEAV</sequence>
<proteinExistence type="inferred from homology"/>
<comment type="similarity">
    <text evidence="1">Belongs to the bacterial ribosomal protein bL28 family.</text>
</comment>
<feature type="chain" id="PRO_1000007395" description="Large ribosomal subunit protein bL28">
    <location>
        <begin position="1"/>
        <end position="78"/>
    </location>
</feature>
<gene>
    <name evidence="1" type="primary">rpmB</name>
    <name type="ordered locus">Tbd_2589</name>
</gene>
<dbReference type="EMBL" id="CP000116">
    <property type="protein sequence ID" value="AAZ98542.1"/>
    <property type="molecule type" value="Genomic_DNA"/>
</dbReference>
<dbReference type="RefSeq" id="WP_011313101.1">
    <property type="nucleotide sequence ID" value="NC_007404.1"/>
</dbReference>
<dbReference type="SMR" id="Q3SFR4"/>
<dbReference type="STRING" id="292415.Tbd_2589"/>
<dbReference type="KEGG" id="tbd:Tbd_2589"/>
<dbReference type="eggNOG" id="COG0227">
    <property type="taxonomic scope" value="Bacteria"/>
</dbReference>
<dbReference type="HOGENOM" id="CLU_064548_3_1_4"/>
<dbReference type="OrthoDB" id="9805609at2"/>
<dbReference type="Proteomes" id="UP000008291">
    <property type="component" value="Chromosome"/>
</dbReference>
<dbReference type="GO" id="GO:0022625">
    <property type="term" value="C:cytosolic large ribosomal subunit"/>
    <property type="evidence" value="ECO:0007669"/>
    <property type="project" value="TreeGrafter"/>
</dbReference>
<dbReference type="GO" id="GO:0003735">
    <property type="term" value="F:structural constituent of ribosome"/>
    <property type="evidence" value="ECO:0007669"/>
    <property type="project" value="InterPro"/>
</dbReference>
<dbReference type="GO" id="GO:0006412">
    <property type="term" value="P:translation"/>
    <property type="evidence" value="ECO:0007669"/>
    <property type="project" value="UniProtKB-UniRule"/>
</dbReference>
<dbReference type="FunFam" id="2.30.170.40:FF:000001">
    <property type="entry name" value="50S ribosomal protein L28"/>
    <property type="match status" value="1"/>
</dbReference>
<dbReference type="Gene3D" id="2.30.170.40">
    <property type="entry name" value="Ribosomal protein L28/L24"/>
    <property type="match status" value="1"/>
</dbReference>
<dbReference type="HAMAP" id="MF_00373">
    <property type="entry name" value="Ribosomal_bL28"/>
    <property type="match status" value="1"/>
</dbReference>
<dbReference type="InterPro" id="IPR026569">
    <property type="entry name" value="Ribosomal_bL28"/>
</dbReference>
<dbReference type="InterPro" id="IPR034704">
    <property type="entry name" value="Ribosomal_bL28/bL31-like_sf"/>
</dbReference>
<dbReference type="InterPro" id="IPR001383">
    <property type="entry name" value="Ribosomal_bL28_bact-type"/>
</dbReference>
<dbReference type="InterPro" id="IPR037147">
    <property type="entry name" value="Ribosomal_bL28_sf"/>
</dbReference>
<dbReference type="NCBIfam" id="TIGR00009">
    <property type="entry name" value="L28"/>
    <property type="match status" value="1"/>
</dbReference>
<dbReference type="PANTHER" id="PTHR13528">
    <property type="entry name" value="39S RIBOSOMAL PROTEIN L28, MITOCHONDRIAL"/>
    <property type="match status" value="1"/>
</dbReference>
<dbReference type="PANTHER" id="PTHR13528:SF2">
    <property type="entry name" value="LARGE RIBOSOMAL SUBUNIT PROTEIN BL28M"/>
    <property type="match status" value="1"/>
</dbReference>
<dbReference type="Pfam" id="PF00830">
    <property type="entry name" value="Ribosomal_L28"/>
    <property type="match status" value="1"/>
</dbReference>
<dbReference type="SUPFAM" id="SSF143800">
    <property type="entry name" value="L28p-like"/>
    <property type="match status" value="1"/>
</dbReference>
<evidence type="ECO:0000255" key="1">
    <source>
        <dbReference type="HAMAP-Rule" id="MF_00373"/>
    </source>
</evidence>
<evidence type="ECO:0000305" key="2"/>
<name>RL28_THIDA</name>
<accession>Q3SFR4</accession>
<organism>
    <name type="scientific">Thiobacillus denitrificans (strain ATCC 25259 / T1)</name>
    <dbReference type="NCBI Taxonomy" id="292415"/>
    <lineage>
        <taxon>Bacteria</taxon>
        <taxon>Pseudomonadati</taxon>
        <taxon>Pseudomonadota</taxon>
        <taxon>Betaproteobacteria</taxon>
        <taxon>Nitrosomonadales</taxon>
        <taxon>Thiobacillaceae</taxon>
        <taxon>Thiobacillus</taxon>
    </lineage>
</organism>
<reference key="1">
    <citation type="journal article" date="2006" name="J. Bacteriol.">
        <title>The genome sequence of the obligately chemolithoautotrophic, facultatively anaerobic bacterium Thiobacillus denitrificans.</title>
        <authorList>
            <person name="Beller H.R."/>
            <person name="Chain P.S."/>
            <person name="Letain T.E."/>
            <person name="Chakicherla A."/>
            <person name="Larimer F.W."/>
            <person name="Richardson P.M."/>
            <person name="Coleman M.A."/>
            <person name="Wood A.P."/>
            <person name="Kelly D.P."/>
        </authorList>
    </citation>
    <scope>NUCLEOTIDE SEQUENCE [LARGE SCALE GENOMIC DNA]</scope>
    <source>
        <strain>ATCC 25259 / T1</strain>
    </source>
</reference>